<feature type="chain" id="PRO_1000006149" description="Elongation factor Ts">
    <location>
        <begin position="1"/>
        <end position="218"/>
    </location>
</feature>
<feature type="region of interest" description="Involved in Mg(2+) ion dislocation from EF-Tu" evidence="1">
    <location>
        <begin position="82"/>
        <end position="85"/>
    </location>
</feature>
<accession>A2BQP0</accession>
<evidence type="ECO:0000255" key="1">
    <source>
        <dbReference type="HAMAP-Rule" id="MF_00050"/>
    </source>
</evidence>
<sequence>MGNITAKLVKDLRDKTGAGMMDCKKALNETEGNLDKALEWLRKKGIASAEKKSGRVAAEGSIGSYIHTGSRVGVLLELNCETDFVARGDIFQSLLKDVSMQVAACPNVEYVSIDEIPEDVVEKEKQIEMGRDDLSGKPEQIKEKIVEGRIAKRLNELVLLSQPYIKDSSLTVEDLVKQAAAKIGENIKVRRFTRYTLGEGIEKNQMDFAEEVASMQKN</sequence>
<reference key="1">
    <citation type="journal article" date="2007" name="PLoS Genet.">
        <title>Patterns and implications of gene gain and loss in the evolution of Prochlorococcus.</title>
        <authorList>
            <person name="Kettler G.C."/>
            <person name="Martiny A.C."/>
            <person name="Huang K."/>
            <person name="Zucker J."/>
            <person name="Coleman M.L."/>
            <person name="Rodrigue S."/>
            <person name="Chen F."/>
            <person name="Lapidus A."/>
            <person name="Ferriera S."/>
            <person name="Johnson J."/>
            <person name="Steglich C."/>
            <person name="Church G.M."/>
            <person name="Richardson P."/>
            <person name="Chisholm S.W."/>
        </authorList>
    </citation>
    <scope>NUCLEOTIDE SEQUENCE [LARGE SCALE GENOMIC DNA]</scope>
    <source>
        <strain>AS9601</strain>
    </source>
</reference>
<organism>
    <name type="scientific">Prochlorococcus marinus (strain AS9601)</name>
    <dbReference type="NCBI Taxonomy" id="146891"/>
    <lineage>
        <taxon>Bacteria</taxon>
        <taxon>Bacillati</taxon>
        <taxon>Cyanobacteriota</taxon>
        <taxon>Cyanophyceae</taxon>
        <taxon>Synechococcales</taxon>
        <taxon>Prochlorococcaceae</taxon>
        <taxon>Prochlorococcus</taxon>
    </lineage>
</organism>
<comment type="function">
    <text evidence="1">Associates with the EF-Tu.GDP complex and induces the exchange of GDP to GTP. It remains bound to the aminoacyl-tRNA.EF-Tu.GTP complex up to the GTP hydrolysis stage on the ribosome.</text>
</comment>
<comment type="subcellular location">
    <subcellularLocation>
        <location evidence="1">Cytoplasm</location>
    </subcellularLocation>
</comment>
<comment type="similarity">
    <text evidence="1">Belongs to the EF-Ts family.</text>
</comment>
<protein>
    <recommendedName>
        <fullName evidence="1">Elongation factor Ts</fullName>
        <shortName evidence="1">EF-Ts</shortName>
    </recommendedName>
</protein>
<keyword id="KW-0963">Cytoplasm</keyword>
<keyword id="KW-0251">Elongation factor</keyword>
<keyword id="KW-0648">Protein biosynthesis</keyword>
<gene>
    <name evidence="1" type="primary">tsf</name>
    <name type="ordered locus">A9601_08151</name>
</gene>
<name>EFTS_PROMS</name>
<dbReference type="EMBL" id="CP000551">
    <property type="protein sequence ID" value="ABM70101.1"/>
    <property type="molecule type" value="Genomic_DNA"/>
</dbReference>
<dbReference type="RefSeq" id="WP_011818260.1">
    <property type="nucleotide sequence ID" value="NC_008816.1"/>
</dbReference>
<dbReference type="SMR" id="A2BQP0"/>
<dbReference type="STRING" id="146891.A9601_08151"/>
<dbReference type="KEGG" id="pmb:A9601_08151"/>
<dbReference type="eggNOG" id="COG0264">
    <property type="taxonomic scope" value="Bacteria"/>
</dbReference>
<dbReference type="HOGENOM" id="CLU_047155_1_1_3"/>
<dbReference type="OrthoDB" id="9808348at2"/>
<dbReference type="Proteomes" id="UP000002590">
    <property type="component" value="Chromosome"/>
</dbReference>
<dbReference type="GO" id="GO:0005737">
    <property type="term" value="C:cytoplasm"/>
    <property type="evidence" value="ECO:0007669"/>
    <property type="project" value="UniProtKB-SubCell"/>
</dbReference>
<dbReference type="GO" id="GO:0003746">
    <property type="term" value="F:translation elongation factor activity"/>
    <property type="evidence" value="ECO:0007669"/>
    <property type="project" value="UniProtKB-UniRule"/>
</dbReference>
<dbReference type="CDD" id="cd14275">
    <property type="entry name" value="UBA_EF-Ts"/>
    <property type="match status" value="1"/>
</dbReference>
<dbReference type="FunFam" id="1.10.286.20:FF:000001">
    <property type="entry name" value="Elongation factor Ts"/>
    <property type="match status" value="1"/>
</dbReference>
<dbReference type="FunFam" id="1.10.8.10:FF:000001">
    <property type="entry name" value="Elongation factor Ts"/>
    <property type="match status" value="1"/>
</dbReference>
<dbReference type="Gene3D" id="1.10.286.20">
    <property type="match status" value="1"/>
</dbReference>
<dbReference type="Gene3D" id="1.10.8.10">
    <property type="entry name" value="DNA helicase RuvA subunit, C-terminal domain"/>
    <property type="match status" value="1"/>
</dbReference>
<dbReference type="Gene3D" id="3.30.479.20">
    <property type="entry name" value="Elongation factor Ts, dimerisation domain"/>
    <property type="match status" value="1"/>
</dbReference>
<dbReference type="HAMAP" id="MF_00050">
    <property type="entry name" value="EF_Ts"/>
    <property type="match status" value="1"/>
</dbReference>
<dbReference type="InterPro" id="IPR036402">
    <property type="entry name" value="EF-Ts_dimer_sf"/>
</dbReference>
<dbReference type="InterPro" id="IPR001816">
    <property type="entry name" value="Transl_elong_EFTs/EF1B"/>
</dbReference>
<dbReference type="InterPro" id="IPR014039">
    <property type="entry name" value="Transl_elong_EFTs/EF1B_dimer"/>
</dbReference>
<dbReference type="InterPro" id="IPR018101">
    <property type="entry name" value="Transl_elong_Ts_CS"/>
</dbReference>
<dbReference type="InterPro" id="IPR009060">
    <property type="entry name" value="UBA-like_sf"/>
</dbReference>
<dbReference type="NCBIfam" id="TIGR00116">
    <property type="entry name" value="tsf"/>
    <property type="match status" value="2"/>
</dbReference>
<dbReference type="PANTHER" id="PTHR11741">
    <property type="entry name" value="ELONGATION FACTOR TS"/>
    <property type="match status" value="1"/>
</dbReference>
<dbReference type="PANTHER" id="PTHR11741:SF10">
    <property type="entry name" value="POLYPROTEIN OF EF-TS, CHLOROPLASTIC"/>
    <property type="match status" value="1"/>
</dbReference>
<dbReference type="Pfam" id="PF00889">
    <property type="entry name" value="EF_TS"/>
    <property type="match status" value="1"/>
</dbReference>
<dbReference type="SUPFAM" id="SSF54713">
    <property type="entry name" value="Elongation factor Ts (EF-Ts), dimerisation domain"/>
    <property type="match status" value="1"/>
</dbReference>
<dbReference type="SUPFAM" id="SSF46934">
    <property type="entry name" value="UBA-like"/>
    <property type="match status" value="1"/>
</dbReference>
<dbReference type="PROSITE" id="PS01126">
    <property type="entry name" value="EF_TS_1"/>
    <property type="match status" value="1"/>
</dbReference>
<dbReference type="PROSITE" id="PS01127">
    <property type="entry name" value="EF_TS_2"/>
    <property type="match status" value="1"/>
</dbReference>
<proteinExistence type="inferred from homology"/>